<feature type="chain" id="PRO_0000394262" description="Protein FAM200B">
    <location>
        <begin position="1"/>
        <end position="657"/>
    </location>
</feature>
<sequence>MDHFFIKRKRNSEVKYTEACSSSSVESGIVNSDNIEKNTDSNLQTSTSFEPHFKKKKVSARRYNEDYLKYGFIKCEKPFENDRPQCVICNNILANESLKPSKLKRHLETQHAELIDKPLEYFQRKKKDIKLSTQFLSCSTAVSEKALLSSYLVAYRVAKEKIANTAAEKIILPACLDMVRTIFDDKSADKLKTIPNDNTVSLRICTIAEHLETMLITRLQSGIDFAIQLDESTDIGSCTTLLVYVRYAWQDDFLEDFLCFLNLTSHLSGLDIFTELERRIVGQYKLNWKNCKGITSDGTATMTGKHSRVIKKLLEVTNNGAVWNHCFIHREGLASREIPQNLMEVLKNAVKVVNFIKGSSLNSRLLETFCSEIGTNHTHLLYHTKIRWLSQGKILSRVYELRNEIHFFLIEKKSHLASIFEDDTWVTKLAYLTDIFSILNELSLKLQGKNSDVFQHVERIQGFRKTLLLWQVRLKSNRPSYYMFPRFLQHIEENIINENILKEIKLEILLHLTSLSQTFNHFFPEEKFETLRENSWVKDPFAFRHPESIIELNLVPEEENELLQLSSSYTLKNDYETLSLSAFWMKVKEDFPLLSRKSVLLLLPFTTTSLCELGFSILTQLKTKERNGLNCAAVMRVALSSCVPDWNELMNRQAHPS</sequence>
<dbReference type="EMBL" id="AC114744">
    <property type="status" value="NOT_ANNOTATED_CDS"/>
    <property type="molecule type" value="Genomic_DNA"/>
</dbReference>
<dbReference type="CCDS" id="CCDS47028.1"/>
<dbReference type="RefSeq" id="NP_001138663.1">
    <property type="nucleotide sequence ID" value="NM_001145191.2"/>
</dbReference>
<dbReference type="RefSeq" id="XP_016863537.1">
    <property type="nucleotide sequence ID" value="XM_017008048.2"/>
</dbReference>
<dbReference type="RefSeq" id="XP_024309767.1">
    <property type="nucleotide sequence ID" value="XM_024453999.2"/>
</dbReference>
<dbReference type="RefSeq" id="XP_024309768.1">
    <property type="nucleotide sequence ID" value="XM_024454000.2"/>
</dbReference>
<dbReference type="RefSeq" id="XP_024309769.1">
    <property type="nucleotide sequence ID" value="XM_024454001.2"/>
</dbReference>
<dbReference type="RefSeq" id="XP_024309771.1">
    <property type="nucleotide sequence ID" value="XM_024454003.2"/>
</dbReference>
<dbReference type="RefSeq" id="XP_024309773.1">
    <property type="nucleotide sequence ID" value="XM_024454005.2"/>
</dbReference>
<dbReference type="RefSeq" id="XP_024309774.1">
    <property type="nucleotide sequence ID" value="XM_024454006.2"/>
</dbReference>
<dbReference type="RefSeq" id="XP_047306059.1">
    <property type="nucleotide sequence ID" value="XM_047450103.1"/>
</dbReference>
<dbReference type="RefSeq" id="XP_047306060.1">
    <property type="nucleotide sequence ID" value="XM_047450104.1"/>
</dbReference>
<dbReference type="RefSeq" id="XP_047306062.1">
    <property type="nucleotide sequence ID" value="XM_047450106.1"/>
</dbReference>
<dbReference type="RefSeq" id="XP_047306063.1">
    <property type="nucleotide sequence ID" value="XM_047450107.1"/>
</dbReference>
<dbReference type="RefSeq" id="XP_047306064.1">
    <property type="nucleotide sequence ID" value="XM_047450108.1"/>
</dbReference>
<dbReference type="RefSeq" id="XP_047306065.1">
    <property type="nucleotide sequence ID" value="XM_047450109.1"/>
</dbReference>
<dbReference type="RefSeq" id="XP_047306066.1">
    <property type="nucleotide sequence ID" value="XM_047450110.1"/>
</dbReference>
<dbReference type="RefSeq" id="XP_047306068.1">
    <property type="nucleotide sequence ID" value="XM_047450112.1"/>
</dbReference>
<dbReference type="BioGRID" id="130142">
    <property type="interactions" value="3"/>
</dbReference>
<dbReference type="FunCoup" id="P0CF97">
    <property type="interactions" value="36"/>
</dbReference>
<dbReference type="IntAct" id="P0CF97">
    <property type="interactions" value="1"/>
</dbReference>
<dbReference type="STRING" id="9606.ENSP00000483930"/>
<dbReference type="GlyGen" id="P0CF97">
    <property type="glycosylation" value="1 site, 1 O-linked glycan (1 site)"/>
</dbReference>
<dbReference type="iPTMnet" id="P0CF97"/>
<dbReference type="PhosphoSitePlus" id="P0CF97"/>
<dbReference type="BioMuta" id="FAM200B"/>
<dbReference type="DMDM" id="296439620"/>
<dbReference type="jPOST" id="P0CF97"/>
<dbReference type="MassIVE" id="P0CF97"/>
<dbReference type="PaxDb" id="9606-ENSP00000483930"/>
<dbReference type="PeptideAtlas" id="P0CF97"/>
<dbReference type="ProteomicsDB" id="52445"/>
<dbReference type="DNASU" id="285550"/>
<dbReference type="Ensembl" id="ENST00000422728.3">
    <property type="protein sequence ID" value="ENSP00000393017.2"/>
    <property type="gene ID" value="ENSG00000237765.8"/>
</dbReference>
<dbReference type="GeneID" id="285550"/>
<dbReference type="KEGG" id="hsa:285550"/>
<dbReference type="MANE-Select" id="ENST00000422728.3">
    <property type="protein sequence ID" value="ENSP00000393017.2"/>
    <property type="RefSeq nucleotide sequence ID" value="NM_001145191.2"/>
    <property type="RefSeq protein sequence ID" value="NP_001138663.1"/>
</dbReference>
<dbReference type="UCSC" id="uc003gof.5">
    <property type="organism name" value="human"/>
</dbReference>
<dbReference type="AGR" id="HGNC:27740"/>
<dbReference type="CTD" id="285550"/>
<dbReference type="GeneCards" id="FAM200B"/>
<dbReference type="HGNC" id="HGNC:27740">
    <property type="gene designation" value="FAM200B"/>
</dbReference>
<dbReference type="HPA" id="ENSG00000237765">
    <property type="expression patterns" value="Low tissue specificity"/>
</dbReference>
<dbReference type="neXtProt" id="NX_P0CF97"/>
<dbReference type="OpenTargets" id="ENSG00000237765"/>
<dbReference type="PharmGKB" id="PA165664101"/>
<dbReference type="VEuPathDB" id="HostDB:ENSG00000237765"/>
<dbReference type="eggNOG" id="ENOG502QT83">
    <property type="taxonomic scope" value="Eukaryota"/>
</dbReference>
<dbReference type="GeneTree" id="ENSGT00940000164387"/>
<dbReference type="HOGENOM" id="CLU_021316_5_0_1"/>
<dbReference type="InParanoid" id="P0CF97"/>
<dbReference type="OMA" id="YYMFPRF"/>
<dbReference type="OrthoDB" id="1101576at2759"/>
<dbReference type="PAN-GO" id="P0CF97">
    <property type="GO annotations" value="0 GO annotations based on evolutionary models"/>
</dbReference>
<dbReference type="PhylomeDB" id="P0CF97"/>
<dbReference type="TreeFam" id="TF328297"/>
<dbReference type="PathwayCommons" id="P0CF97"/>
<dbReference type="SignaLink" id="P0CF97"/>
<dbReference type="BioGRID-ORCS" id="285550">
    <property type="hits" value="52 hits in 1116 CRISPR screens"/>
</dbReference>
<dbReference type="ChiTaRS" id="FAM200B">
    <property type="organism name" value="human"/>
</dbReference>
<dbReference type="GenomeRNAi" id="285550"/>
<dbReference type="Pharos" id="P0CF97">
    <property type="development level" value="Tdark"/>
</dbReference>
<dbReference type="PRO" id="PR:P0CF97"/>
<dbReference type="Proteomes" id="UP000005640">
    <property type="component" value="Chromosome 4"/>
</dbReference>
<dbReference type="RNAct" id="P0CF97">
    <property type="molecule type" value="protein"/>
</dbReference>
<dbReference type="Bgee" id="ENSG00000237765">
    <property type="expression patterns" value="Expressed in monocyte and 178 other cell types or tissues"/>
</dbReference>
<dbReference type="ExpressionAtlas" id="P0CF97">
    <property type="expression patterns" value="baseline and differential"/>
</dbReference>
<dbReference type="InterPro" id="IPR012337">
    <property type="entry name" value="RNaseH-like_sf"/>
</dbReference>
<dbReference type="PANTHER" id="PTHR45913">
    <property type="entry name" value="EPM2A-INTERACTING PROTEIN 1"/>
    <property type="match status" value="1"/>
</dbReference>
<dbReference type="PANTHER" id="PTHR45913:SF19">
    <property type="entry name" value="LOW QUALITY PROTEIN: ZINC FINGER BED DOMAIN-CONTAINING PROTEIN 5-LIKE"/>
    <property type="match status" value="1"/>
</dbReference>
<dbReference type="SUPFAM" id="SSF53098">
    <property type="entry name" value="Ribonuclease H-like"/>
    <property type="match status" value="1"/>
</dbReference>
<proteinExistence type="evidence at protein level"/>
<gene>
    <name evidence="2" type="primary">FAM200B</name>
    <name evidence="2" type="synonym">C4orf53</name>
</gene>
<evidence type="ECO:0000305" key="1"/>
<evidence type="ECO:0000312" key="2">
    <source>
        <dbReference type="HGNC" id="HGNC:27740"/>
    </source>
</evidence>
<comment type="similarity">
    <text evidence="1">Belongs to the FAM200 family.</text>
</comment>
<keyword id="KW-1267">Proteomics identification</keyword>
<keyword id="KW-1185">Reference proteome</keyword>
<organism>
    <name type="scientific">Homo sapiens</name>
    <name type="common">Human</name>
    <dbReference type="NCBI Taxonomy" id="9606"/>
    <lineage>
        <taxon>Eukaryota</taxon>
        <taxon>Metazoa</taxon>
        <taxon>Chordata</taxon>
        <taxon>Craniata</taxon>
        <taxon>Vertebrata</taxon>
        <taxon>Euteleostomi</taxon>
        <taxon>Mammalia</taxon>
        <taxon>Eutheria</taxon>
        <taxon>Euarchontoglires</taxon>
        <taxon>Primates</taxon>
        <taxon>Haplorrhini</taxon>
        <taxon>Catarrhini</taxon>
        <taxon>Hominidae</taxon>
        <taxon>Homo</taxon>
    </lineage>
</organism>
<accession>P0CF97</accession>
<name>F200B_HUMAN</name>
<protein>
    <recommendedName>
        <fullName evidence="1">Protein FAM200B</fullName>
    </recommendedName>
</protein>
<reference key="1">
    <citation type="journal article" date="2005" name="Nature">
        <title>Generation and annotation of the DNA sequences of human chromosomes 2 and 4.</title>
        <authorList>
            <person name="Hillier L.W."/>
            <person name="Graves T.A."/>
            <person name="Fulton R.S."/>
            <person name="Fulton L.A."/>
            <person name="Pepin K.H."/>
            <person name="Minx P."/>
            <person name="Wagner-McPherson C."/>
            <person name="Layman D."/>
            <person name="Wylie K."/>
            <person name="Sekhon M."/>
            <person name="Becker M.C."/>
            <person name="Fewell G.A."/>
            <person name="Delehaunty K.D."/>
            <person name="Miner T.L."/>
            <person name="Nash W.E."/>
            <person name="Kremitzki C."/>
            <person name="Oddy L."/>
            <person name="Du H."/>
            <person name="Sun H."/>
            <person name="Bradshaw-Cordum H."/>
            <person name="Ali J."/>
            <person name="Carter J."/>
            <person name="Cordes M."/>
            <person name="Harris A."/>
            <person name="Isak A."/>
            <person name="van Brunt A."/>
            <person name="Nguyen C."/>
            <person name="Du F."/>
            <person name="Courtney L."/>
            <person name="Kalicki J."/>
            <person name="Ozersky P."/>
            <person name="Abbott S."/>
            <person name="Armstrong J."/>
            <person name="Belter E.A."/>
            <person name="Caruso L."/>
            <person name="Cedroni M."/>
            <person name="Cotton M."/>
            <person name="Davidson T."/>
            <person name="Desai A."/>
            <person name="Elliott G."/>
            <person name="Erb T."/>
            <person name="Fronick C."/>
            <person name="Gaige T."/>
            <person name="Haakenson W."/>
            <person name="Haglund K."/>
            <person name="Holmes A."/>
            <person name="Harkins R."/>
            <person name="Kim K."/>
            <person name="Kruchowski S.S."/>
            <person name="Strong C.M."/>
            <person name="Grewal N."/>
            <person name="Goyea E."/>
            <person name="Hou S."/>
            <person name="Levy A."/>
            <person name="Martinka S."/>
            <person name="Mead K."/>
            <person name="McLellan M.D."/>
            <person name="Meyer R."/>
            <person name="Randall-Maher J."/>
            <person name="Tomlinson C."/>
            <person name="Dauphin-Kohlberg S."/>
            <person name="Kozlowicz-Reilly A."/>
            <person name="Shah N."/>
            <person name="Swearengen-Shahid S."/>
            <person name="Snider J."/>
            <person name="Strong J.T."/>
            <person name="Thompson J."/>
            <person name="Yoakum M."/>
            <person name="Leonard S."/>
            <person name="Pearman C."/>
            <person name="Trani L."/>
            <person name="Radionenko M."/>
            <person name="Waligorski J.E."/>
            <person name="Wang C."/>
            <person name="Rock S.M."/>
            <person name="Tin-Wollam A.-M."/>
            <person name="Maupin R."/>
            <person name="Latreille P."/>
            <person name="Wendl M.C."/>
            <person name="Yang S.-P."/>
            <person name="Pohl C."/>
            <person name="Wallis J.W."/>
            <person name="Spieth J."/>
            <person name="Bieri T.A."/>
            <person name="Berkowicz N."/>
            <person name="Nelson J.O."/>
            <person name="Osborne J."/>
            <person name="Ding L."/>
            <person name="Meyer R."/>
            <person name="Sabo A."/>
            <person name="Shotland Y."/>
            <person name="Sinha P."/>
            <person name="Wohldmann P.E."/>
            <person name="Cook L.L."/>
            <person name="Hickenbotham M.T."/>
            <person name="Eldred J."/>
            <person name="Williams D."/>
            <person name="Jones T.A."/>
            <person name="She X."/>
            <person name="Ciccarelli F.D."/>
            <person name="Izaurralde E."/>
            <person name="Taylor J."/>
            <person name="Schmutz J."/>
            <person name="Myers R.M."/>
            <person name="Cox D.R."/>
            <person name="Huang X."/>
            <person name="McPherson J.D."/>
            <person name="Mardis E.R."/>
            <person name="Clifton S.W."/>
            <person name="Warren W.C."/>
            <person name="Chinwalla A.T."/>
            <person name="Eddy S.R."/>
            <person name="Marra M.A."/>
            <person name="Ovcharenko I."/>
            <person name="Furey T.S."/>
            <person name="Miller W."/>
            <person name="Eichler E.E."/>
            <person name="Bork P."/>
            <person name="Suyama M."/>
            <person name="Torrents D."/>
            <person name="Waterston R.H."/>
            <person name="Wilson R.K."/>
        </authorList>
    </citation>
    <scope>NUCLEOTIDE SEQUENCE [LARGE SCALE GENOMIC DNA]</scope>
</reference>